<feature type="chain" id="PRO_1000004074" description="Small ribosomal subunit protein uS2">
    <location>
        <begin position="1"/>
        <end position="256"/>
    </location>
</feature>
<protein>
    <recommendedName>
        <fullName evidence="1">Small ribosomal subunit protein uS2</fullName>
    </recommendedName>
    <alternativeName>
        <fullName evidence="2">30S ribosomal protein S2</fullName>
    </alternativeName>
</protein>
<organism>
    <name type="scientific">Ruegeria sp. (strain TM1040)</name>
    <name type="common">Silicibacter sp.</name>
    <dbReference type="NCBI Taxonomy" id="292414"/>
    <lineage>
        <taxon>Bacteria</taxon>
        <taxon>Pseudomonadati</taxon>
        <taxon>Pseudomonadota</taxon>
        <taxon>Alphaproteobacteria</taxon>
        <taxon>Rhodobacterales</taxon>
        <taxon>Roseobacteraceae</taxon>
        <taxon>Ruegeria</taxon>
    </lineage>
</organism>
<proteinExistence type="inferred from homology"/>
<comment type="similarity">
    <text evidence="1">Belongs to the universal ribosomal protein uS2 family.</text>
</comment>
<gene>
    <name evidence="1" type="primary">rpsB</name>
    <name type="ordered locus">TM1040_1210</name>
</gene>
<keyword id="KW-1185">Reference proteome</keyword>
<keyword id="KW-0687">Ribonucleoprotein</keyword>
<keyword id="KW-0689">Ribosomal protein</keyword>
<sequence length="256" mass="27471">MALPEFTMRQLLEAGVHFGHQTQRWNPRMSPFIYGARNGIHIMDLTQTVPMLDQALTAIRDTVAKGGRVLFVGTKRQAAAPIAEAAEKSAQYYMNHRWLGGTLTNWKTVSQSINRLKEIDERMAAGAEGLTKKERLGMERDQEKLQASLGGIRDMGGVPDLLFVIDVKKEALAIAEANKLGIPVVAVVDTNCSPDGVDYIIPGNDDAARAISLYCDLVARAALDGMSAQLGAAGVDLGALEEAPVEEAVAEEAAGA</sequence>
<accession>Q1GHC3</accession>
<dbReference type="EMBL" id="CP000377">
    <property type="protein sequence ID" value="ABF63943.1"/>
    <property type="molecule type" value="Genomic_DNA"/>
</dbReference>
<dbReference type="RefSeq" id="WP_011538549.1">
    <property type="nucleotide sequence ID" value="NC_008044.1"/>
</dbReference>
<dbReference type="SMR" id="Q1GHC3"/>
<dbReference type="STRING" id="292414.TM1040_1210"/>
<dbReference type="KEGG" id="sit:TM1040_1210"/>
<dbReference type="eggNOG" id="COG0052">
    <property type="taxonomic scope" value="Bacteria"/>
</dbReference>
<dbReference type="HOGENOM" id="CLU_040318_2_3_5"/>
<dbReference type="OrthoDB" id="9808036at2"/>
<dbReference type="Proteomes" id="UP000000636">
    <property type="component" value="Chromosome"/>
</dbReference>
<dbReference type="GO" id="GO:0022627">
    <property type="term" value="C:cytosolic small ribosomal subunit"/>
    <property type="evidence" value="ECO:0007669"/>
    <property type="project" value="TreeGrafter"/>
</dbReference>
<dbReference type="GO" id="GO:0003735">
    <property type="term" value="F:structural constituent of ribosome"/>
    <property type="evidence" value="ECO:0007669"/>
    <property type="project" value="InterPro"/>
</dbReference>
<dbReference type="GO" id="GO:0006412">
    <property type="term" value="P:translation"/>
    <property type="evidence" value="ECO:0007669"/>
    <property type="project" value="UniProtKB-UniRule"/>
</dbReference>
<dbReference type="CDD" id="cd01425">
    <property type="entry name" value="RPS2"/>
    <property type="match status" value="1"/>
</dbReference>
<dbReference type="Gene3D" id="3.40.50.10490">
    <property type="entry name" value="Glucose-6-phosphate isomerase like protein, domain 1"/>
    <property type="match status" value="1"/>
</dbReference>
<dbReference type="Gene3D" id="1.10.287.610">
    <property type="entry name" value="Helix hairpin bin"/>
    <property type="match status" value="1"/>
</dbReference>
<dbReference type="HAMAP" id="MF_00291_B">
    <property type="entry name" value="Ribosomal_uS2_B"/>
    <property type="match status" value="1"/>
</dbReference>
<dbReference type="InterPro" id="IPR001865">
    <property type="entry name" value="Ribosomal_uS2"/>
</dbReference>
<dbReference type="InterPro" id="IPR005706">
    <property type="entry name" value="Ribosomal_uS2_bac/mit/plastid"/>
</dbReference>
<dbReference type="InterPro" id="IPR018130">
    <property type="entry name" value="Ribosomal_uS2_CS"/>
</dbReference>
<dbReference type="InterPro" id="IPR023591">
    <property type="entry name" value="Ribosomal_uS2_flav_dom_sf"/>
</dbReference>
<dbReference type="NCBIfam" id="TIGR01011">
    <property type="entry name" value="rpsB_bact"/>
    <property type="match status" value="1"/>
</dbReference>
<dbReference type="PANTHER" id="PTHR12534">
    <property type="entry name" value="30S RIBOSOMAL PROTEIN S2 PROKARYOTIC AND ORGANELLAR"/>
    <property type="match status" value="1"/>
</dbReference>
<dbReference type="PANTHER" id="PTHR12534:SF0">
    <property type="entry name" value="SMALL RIBOSOMAL SUBUNIT PROTEIN US2M"/>
    <property type="match status" value="1"/>
</dbReference>
<dbReference type="Pfam" id="PF00318">
    <property type="entry name" value="Ribosomal_S2"/>
    <property type="match status" value="1"/>
</dbReference>
<dbReference type="PRINTS" id="PR00395">
    <property type="entry name" value="RIBOSOMALS2"/>
</dbReference>
<dbReference type="SUPFAM" id="SSF52313">
    <property type="entry name" value="Ribosomal protein S2"/>
    <property type="match status" value="1"/>
</dbReference>
<dbReference type="PROSITE" id="PS00962">
    <property type="entry name" value="RIBOSOMAL_S2_1"/>
    <property type="match status" value="1"/>
</dbReference>
<dbReference type="PROSITE" id="PS00963">
    <property type="entry name" value="RIBOSOMAL_S2_2"/>
    <property type="match status" value="1"/>
</dbReference>
<name>RS2_RUEST</name>
<evidence type="ECO:0000255" key="1">
    <source>
        <dbReference type="HAMAP-Rule" id="MF_00291"/>
    </source>
</evidence>
<evidence type="ECO:0000305" key="2"/>
<reference key="1">
    <citation type="submission" date="2006-05" db="EMBL/GenBank/DDBJ databases">
        <title>Complete sequence of chromosome of Silicibacter sp. TM1040.</title>
        <authorList>
            <consortium name="US DOE Joint Genome Institute"/>
            <person name="Copeland A."/>
            <person name="Lucas S."/>
            <person name="Lapidus A."/>
            <person name="Barry K."/>
            <person name="Detter J.C."/>
            <person name="Glavina del Rio T."/>
            <person name="Hammon N."/>
            <person name="Israni S."/>
            <person name="Dalin E."/>
            <person name="Tice H."/>
            <person name="Pitluck S."/>
            <person name="Brettin T."/>
            <person name="Bruce D."/>
            <person name="Han C."/>
            <person name="Tapia R."/>
            <person name="Goodwin L."/>
            <person name="Thompson L.S."/>
            <person name="Gilna P."/>
            <person name="Schmutz J."/>
            <person name="Larimer F."/>
            <person name="Land M."/>
            <person name="Hauser L."/>
            <person name="Kyrpides N."/>
            <person name="Kim E."/>
            <person name="Belas R."/>
            <person name="Moran M.A."/>
            <person name="Buchan A."/>
            <person name="Gonzalez J.M."/>
            <person name="Schell M.A."/>
            <person name="Sun F."/>
            <person name="Richardson P."/>
        </authorList>
    </citation>
    <scope>NUCLEOTIDE SEQUENCE [LARGE SCALE GENOMIC DNA]</scope>
    <source>
        <strain>TM1040</strain>
    </source>
</reference>